<feature type="chain" id="PRO_0000105658" description="HTH-type transcriptional activator IlvY">
    <location>
        <begin position="1"/>
        <end position="292"/>
    </location>
</feature>
<feature type="domain" description="HTH lysR-type" evidence="2">
    <location>
        <begin position="1"/>
        <end position="58"/>
    </location>
</feature>
<feature type="DNA-binding region" description="H-T-H motif" evidence="2">
    <location>
        <begin position="18"/>
        <end position="37"/>
    </location>
</feature>
<proteinExistence type="inferred from homology"/>
<keyword id="KW-0010">Activator</keyword>
<keyword id="KW-0028">Amino-acid biosynthesis</keyword>
<keyword id="KW-0100">Branched-chain amino acid biosynthesis</keyword>
<keyword id="KW-0963">Cytoplasm</keyword>
<keyword id="KW-0238">DNA-binding</keyword>
<keyword id="KW-1185">Reference proteome</keyword>
<keyword id="KW-0678">Repressor</keyword>
<keyword id="KW-0804">Transcription</keyword>
<keyword id="KW-0805">Transcription regulation</keyword>
<reference key="1">
    <citation type="journal article" date="1995" name="Science">
        <title>Whole-genome random sequencing and assembly of Haemophilus influenzae Rd.</title>
        <authorList>
            <person name="Fleischmann R.D."/>
            <person name="Adams M.D."/>
            <person name="White O."/>
            <person name="Clayton R.A."/>
            <person name="Kirkness E.F."/>
            <person name="Kerlavage A.R."/>
            <person name="Bult C.J."/>
            <person name="Tomb J.-F."/>
            <person name="Dougherty B.A."/>
            <person name="Merrick J.M."/>
            <person name="McKenney K."/>
            <person name="Sutton G.G."/>
            <person name="FitzHugh W."/>
            <person name="Fields C.A."/>
            <person name="Gocayne J.D."/>
            <person name="Scott J.D."/>
            <person name="Shirley R."/>
            <person name="Liu L.-I."/>
            <person name="Glodek A."/>
            <person name="Kelley J.M."/>
            <person name="Weidman J.F."/>
            <person name="Phillips C.A."/>
            <person name="Spriggs T."/>
            <person name="Hedblom E."/>
            <person name="Cotton M.D."/>
            <person name="Utterback T.R."/>
            <person name="Hanna M.C."/>
            <person name="Nguyen D.T."/>
            <person name="Saudek D.M."/>
            <person name="Brandon R.C."/>
            <person name="Fine L.D."/>
            <person name="Fritchman J.L."/>
            <person name="Fuhrmann J.L."/>
            <person name="Geoghagen N.S.M."/>
            <person name="Gnehm C.L."/>
            <person name="McDonald L.A."/>
            <person name="Small K.V."/>
            <person name="Fraser C.M."/>
            <person name="Smith H.O."/>
            <person name="Venter J.C."/>
        </authorList>
    </citation>
    <scope>NUCLEOTIDE SEQUENCE [LARGE SCALE GENOMIC DNA]</scope>
    <source>
        <strain>ATCC 51907 / DSM 11121 / KW20 / Rd</strain>
    </source>
</reference>
<gene>
    <name type="primary">ilvY</name>
    <name type="ordered locus">HI_0681</name>
</gene>
<protein>
    <recommendedName>
        <fullName>HTH-type transcriptional activator IlvY</fullName>
    </recommendedName>
</protein>
<name>ILVY_HAEIN</name>
<accession>P44821</accession>
<sequence>MEFTDLQIFIHLSDTKNFTKTATQNHMSPSTLSRQIQRLEDELGKTLFIRDNRQVKLTEYGEKFLQFAKTEWQNWQQFKQQLKDESDELCGEIKLFCSVTASYSHLPHVLKEFRQRYPKVEIQLTTGDPALALELIQAQQVDLALAGKPNNLPSSVVFHKIDDISLSLIAPRVACLATQLLQEKPIDWQQMPFIFPVEGHARQRIEQWLREKQIKHPKIYATVAGHEGIVPMVGLGFGLAMLPDAVIDSSPMNNQISRLNLDKPIEPFELGICTQKRNLEQPLVRAFWAMLE</sequence>
<dbReference type="EMBL" id="L42023">
    <property type="protein sequence ID" value="AAC22340.1"/>
    <property type="molecule type" value="Genomic_DNA"/>
</dbReference>
<dbReference type="PIR" id="A64086">
    <property type="entry name" value="A64086"/>
</dbReference>
<dbReference type="RefSeq" id="NP_438841.1">
    <property type="nucleotide sequence ID" value="NC_000907.1"/>
</dbReference>
<dbReference type="SMR" id="P44821"/>
<dbReference type="STRING" id="71421.HI_0681"/>
<dbReference type="DNASU" id="949718"/>
<dbReference type="EnsemblBacteria" id="AAC22340">
    <property type="protein sequence ID" value="AAC22340"/>
    <property type="gene ID" value="HI_0681"/>
</dbReference>
<dbReference type="KEGG" id="hin:HI_0681"/>
<dbReference type="PATRIC" id="fig|71421.8.peg.712"/>
<dbReference type="eggNOG" id="COG0583">
    <property type="taxonomic scope" value="Bacteria"/>
</dbReference>
<dbReference type="HOGENOM" id="CLU_039613_6_1_6"/>
<dbReference type="OrthoDB" id="9775392at2"/>
<dbReference type="PhylomeDB" id="P44821"/>
<dbReference type="BioCyc" id="HINF71421:G1GJ1-716-MONOMER"/>
<dbReference type="Proteomes" id="UP000000579">
    <property type="component" value="Chromosome"/>
</dbReference>
<dbReference type="GO" id="GO:0005737">
    <property type="term" value="C:cytoplasm"/>
    <property type="evidence" value="ECO:0007669"/>
    <property type="project" value="UniProtKB-SubCell"/>
</dbReference>
<dbReference type="GO" id="GO:0003700">
    <property type="term" value="F:DNA-binding transcription factor activity"/>
    <property type="evidence" value="ECO:0007669"/>
    <property type="project" value="InterPro"/>
</dbReference>
<dbReference type="GO" id="GO:0000976">
    <property type="term" value="F:transcription cis-regulatory region binding"/>
    <property type="evidence" value="ECO:0000318"/>
    <property type="project" value="GO_Central"/>
</dbReference>
<dbReference type="GO" id="GO:0008652">
    <property type="term" value="P:amino acid biosynthetic process"/>
    <property type="evidence" value="ECO:0007669"/>
    <property type="project" value="UniProtKB-KW"/>
</dbReference>
<dbReference type="GO" id="GO:0009082">
    <property type="term" value="P:branched-chain amino acid biosynthetic process"/>
    <property type="evidence" value="ECO:0007669"/>
    <property type="project" value="UniProtKB-KW"/>
</dbReference>
<dbReference type="GO" id="GO:0006355">
    <property type="term" value="P:regulation of DNA-templated transcription"/>
    <property type="evidence" value="ECO:0000318"/>
    <property type="project" value="GO_Central"/>
</dbReference>
<dbReference type="CDD" id="cd08430">
    <property type="entry name" value="PBP2_IlvY"/>
    <property type="match status" value="1"/>
</dbReference>
<dbReference type="FunFam" id="1.10.10.10:FF:000001">
    <property type="entry name" value="LysR family transcriptional regulator"/>
    <property type="match status" value="1"/>
</dbReference>
<dbReference type="Gene3D" id="3.40.190.290">
    <property type="match status" value="1"/>
</dbReference>
<dbReference type="Gene3D" id="1.10.10.10">
    <property type="entry name" value="Winged helix-like DNA-binding domain superfamily/Winged helix DNA-binding domain"/>
    <property type="match status" value="1"/>
</dbReference>
<dbReference type="InterPro" id="IPR037404">
    <property type="entry name" value="IlvY_PBP2"/>
</dbReference>
<dbReference type="InterPro" id="IPR005119">
    <property type="entry name" value="LysR_subst-bd"/>
</dbReference>
<dbReference type="InterPro" id="IPR000847">
    <property type="entry name" value="Tscrpt_reg_HTH_LysR"/>
</dbReference>
<dbReference type="InterPro" id="IPR036388">
    <property type="entry name" value="WH-like_DNA-bd_sf"/>
</dbReference>
<dbReference type="InterPro" id="IPR036390">
    <property type="entry name" value="WH_DNA-bd_sf"/>
</dbReference>
<dbReference type="NCBIfam" id="NF008722">
    <property type="entry name" value="PRK11716.1"/>
    <property type="match status" value="1"/>
</dbReference>
<dbReference type="PANTHER" id="PTHR30126">
    <property type="entry name" value="HTH-TYPE TRANSCRIPTIONAL REGULATOR"/>
    <property type="match status" value="1"/>
</dbReference>
<dbReference type="PANTHER" id="PTHR30126:SF81">
    <property type="entry name" value="HTH-TYPE TRANSCRIPTIONAL REGULATOR ILVY"/>
    <property type="match status" value="1"/>
</dbReference>
<dbReference type="Pfam" id="PF00126">
    <property type="entry name" value="HTH_1"/>
    <property type="match status" value="1"/>
</dbReference>
<dbReference type="Pfam" id="PF03466">
    <property type="entry name" value="LysR_substrate"/>
    <property type="match status" value="1"/>
</dbReference>
<dbReference type="SUPFAM" id="SSF53850">
    <property type="entry name" value="Periplasmic binding protein-like II"/>
    <property type="match status" value="1"/>
</dbReference>
<dbReference type="SUPFAM" id="SSF46785">
    <property type="entry name" value="Winged helix' DNA-binding domain"/>
    <property type="match status" value="1"/>
</dbReference>
<dbReference type="PROSITE" id="PS50931">
    <property type="entry name" value="HTH_LYSR"/>
    <property type="match status" value="1"/>
</dbReference>
<organism>
    <name type="scientific">Haemophilus influenzae (strain ATCC 51907 / DSM 11121 / KW20 / Rd)</name>
    <dbReference type="NCBI Taxonomy" id="71421"/>
    <lineage>
        <taxon>Bacteria</taxon>
        <taxon>Pseudomonadati</taxon>
        <taxon>Pseudomonadota</taxon>
        <taxon>Gammaproteobacteria</taxon>
        <taxon>Pasteurellales</taxon>
        <taxon>Pasteurellaceae</taxon>
        <taxon>Haemophilus</taxon>
    </lineage>
</organism>
<comment type="function">
    <text evidence="1">This protein activates the transcription of the ilvC gene in the presence of acetolactate or acetohydroxybutyrate. IlvY is also a negative regulator of its own expression (By similarity).</text>
</comment>
<comment type="subcellular location">
    <subcellularLocation>
        <location evidence="1">Cytoplasm</location>
    </subcellularLocation>
</comment>
<comment type="similarity">
    <text evidence="3">Belongs to the LysR transcriptional regulatory family.</text>
</comment>
<evidence type="ECO:0000250" key="1"/>
<evidence type="ECO:0000255" key="2">
    <source>
        <dbReference type="PROSITE-ProRule" id="PRU00253"/>
    </source>
</evidence>
<evidence type="ECO:0000305" key="3"/>